<protein>
    <recommendedName>
        <fullName>WD repeat-containing protein 48 homolog</fullName>
    </recommendedName>
</protein>
<dbReference type="EMBL" id="DS232301">
    <property type="protein sequence ID" value="EDS39433.1"/>
    <property type="molecule type" value="Genomic_DNA"/>
</dbReference>
<dbReference type="RefSeq" id="XP_001863981.1">
    <property type="nucleotide sequence ID" value="XM_001863946.1"/>
</dbReference>
<dbReference type="SMR" id="B0X2V9"/>
<dbReference type="FunCoup" id="B0X2V9">
    <property type="interactions" value="3069"/>
</dbReference>
<dbReference type="STRING" id="7176.B0X2V9"/>
<dbReference type="EnsemblMetazoa" id="CPIJ014111-RA">
    <property type="protein sequence ID" value="CPIJ014111-PA"/>
    <property type="gene ID" value="CPIJ014111"/>
</dbReference>
<dbReference type="KEGG" id="cqu:CpipJ_CPIJ014111"/>
<dbReference type="VEuPathDB" id="VectorBase:CPIJ014111"/>
<dbReference type="VEuPathDB" id="VectorBase:CQUJHB012534"/>
<dbReference type="eggNOG" id="KOG0308">
    <property type="taxonomic scope" value="Eukaryota"/>
</dbReference>
<dbReference type="HOGENOM" id="CLU_014960_0_1_1"/>
<dbReference type="InParanoid" id="B0X2V9"/>
<dbReference type="OMA" id="IIRVWHT"/>
<dbReference type="OrthoDB" id="2421129at2759"/>
<dbReference type="PhylomeDB" id="B0X2V9"/>
<dbReference type="Proteomes" id="UP000002320">
    <property type="component" value="Unassembled WGS sequence"/>
</dbReference>
<dbReference type="GO" id="GO:0043130">
    <property type="term" value="F:ubiquitin binding"/>
    <property type="evidence" value="ECO:0007669"/>
    <property type="project" value="TreeGrafter"/>
</dbReference>
<dbReference type="GO" id="GO:0000724">
    <property type="term" value="P:double-strand break repair via homologous recombination"/>
    <property type="evidence" value="ECO:0007669"/>
    <property type="project" value="TreeGrafter"/>
</dbReference>
<dbReference type="CDD" id="cd00200">
    <property type="entry name" value="WD40"/>
    <property type="match status" value="1"/>
</dbReference>
<dbReference type="FunFam" id="2.130.10.10:FF:000543">
    <property type="entry name" value="WD repeat-containing protein 48 homolog"/>
    <property type="match status" value="1"/>
</dbReference>
<dbReference type="FunFam" id="2.130.10.10:FF:000984">
    <property type="entry name" value="WD repeat-containing protein 48 homolog"/>
    <property type="match status" value="1"/>
</dbReference>
<dbReference type="Gene3D" id="2.130.10.10">
    <property type="entry name" value="YVTN repeat-like/Quinoprotein amine dehydrogenase"/>
    <property type="match status" value="2"/>
</dbReference>
<dbReference type="InterPro" id="IPR020472">
    <property type="entry name" value="G-protein_beta_WD-40_rep"/>
</dbReference>
<dbReference type="InterPro" id="IPR015943">
    <property type="entry name" value="WD40/YVTN_repeat-like_dom_sf"/>
</dbReference>
<dbReference type="InterPro" id="IPR019775">
    <property type="entry name" value="WD40_repeat_CS"/>
</dbReference>
<dbReference type="InterPro" id="IPR036322">
    <property type="entry name" value="WD40_repeat_dom_sf"/>
</dbReference>
<dbReference type="InterPro" id="IPR001680">
    <property type="entry name" value="WD40_rpt"/>
</dbReference>
<dbReference type="InterPro" id="IPR051246">
    <property type="entry name" value="WDR48"/>
</dbReference>
<dbReference type="InterPro" id="IPR021772">
    <property type="entry name" value="WDR48/Bun107"/>
</dbReference>
<dbReference type="PANTHER" id="PTHR19862">
    <property type="entry name" value="WD REPEAT-CONTAINING PROTEIN 48"/>
    <property type="match status" value="1"/>
</dbReference>
<dbReference type="PANTHER" id="PTHR19862:SF14">
    <property type="entry name" value="WD REPEAT-CONTAINING PROTEIN 48"/>
    <property type="match status" value="1"/>
</dbReference>
<dbReference type="Pfam" id="PF11816">
    <property type="entry name" value="DUF3337"/>
    <property type="match status" value="1"/>
</dbReference>
<dbReference type="Pfam" id="PF00400">
    <property type="entry name" value="WD40"/>
    <property type="match status" value="6"/>
</dbReference>
<dbReference type="PRINTS" id="PR00320">
    <property type="entry name" value="GPROTEINBRPT"/>
</dbReference>
<dbReference type="SMART" id="SM00320">
    <property type="entry name" value="WD40"/>
    <property type="match status" value="7"/>
</dbReference>
<dbReference type="SUPFAM" id="SSF50978">
    <property type="entry name" value="WD40 repeat-like"/>
    <property type="match status" value="1"/>
</dbReference>
<dbReference type="PROSITE" id="PS00678">
    <property type="entry name" value="WD_REPEATS_1"/>
    <property type="match status" value="3"/>
</dbReference>
<dbReference type="PROSITE" id="PS50082">
    <property type="entry name" value="WD_REPEATS_2"/>
    <property type="match status" value="5"/>
</dbReference>
<dbReference type="PROSITE" id="PS50294">
    <property type="entry name" value="WD_REPEATS_REGION"/>
    <property type="match status" value="4"/>
</dbReference>
<accession>B0X2V9</accession>
<comment type="function">
    <text evidence="1 2 3">Regulatory component of the Usp12-46 deubiquitylase complex (By similarity). activates deubiquitination by increasing the catalytic turnover without increasing the affinity of deubiquitinating enzymes for the substrate (By similarity). The complex deubiquitylates the wg/wingless-signaling receptor arr/arrow, which stabilizes the receptor and increases its concentration at the cell surface; this enhances the sensitivity of cells to wg/wingless-signal stimulation. This increases the amplitude and spatial range of the signaling response to the wg/wingless morphogen gradient, facilitating the precise concentration-dependent regulation of its target genes. Together with Wdr20 and Usp12-46 required for wg/wingless-mediated signaling in the wing imaginal disc and for wg/wingless-dependent regulation of intestinal stem cell proliferation (By similarity).</text>
</comment>
<comment type="subunit">
    <text evidence="2">Catalytic component of the Usp12-46 deubiquitylase complex consisting of Usp12-46, Wdr20 and Uaf1; regulatory subunit that, together wtih Wdr20, stabilizes Usp12-46. The Usp12-46 deubiquitylase complex associates with arr/arrow; the interaction leads to deubiquitination and stabilization of arr/arrow.</text>
</comment>
<comment type="similarity">
    <text evidence="6">Belongs to the WD repeat WDR48 family.</text>
</comment>
<evidence type="ECO:0000250" key="1"/>
<evidence type="ECO:0000250" key="2">
    <source>
        <dbReference type="UniProtKB" id="Q1LZ08"/>
    </source>
</evidence>
<evidence type="ECO:0000250" key="3">
    <source>
        <dbReference type="UniProtKB" id="Q8TAF3"/>
    </source>
</evidence>
<evidence type="ECO:0000255" key="4"/>
<evidence type="ECO:0000256" key="5">
    <source>
        <dbReference type="SAM" id="MobiDB-lite"/>
    </source>
</evidence>
<evidence type="ECO:0000305" key="6"/>
<evidence type="ECO:0000312" key="7">
    <source>
        <dbReference type="Proteomes" id="UP000002320"/>
    </source>
</evidence>
<proteinExistence type="inferred from homology"/>
<sequence>MVSFVIRDAEEKRHRNGVNALQLDPVNGRLYSAGRDAIIRVWNSTQTSSQEPYIQSMEHHNDWVNDIVLCCGGRNLISASCDTTVKVWNAHKGFCMSTLRTHRDYVQALAYAKDREQVASAGLDKAIFLWDVNTLTALTASNNTVTTSSITGSKDSIYSLAMNPSGTIIVSGSTENTLRIWDPRTCNKIAKLKGHTENVKALVVSEDGTQVVSGSSDGKIKLWSIGQQRCIQTISVHSEGVWALLMTDNFSHVISGSRDKKIVMTELRNPTNSVLICEERAPVLSLCYNIDQTGIWATTWNSDVRCWKLNKTDKLSNYSYSSNSSINSGGGGDGTPVTNSASNATPASAGKGYEVACIKGGAAIKKYHVLNDKRFMLTKDSEQNVAIYDVLKVKKVEDLGKVDYEEEIKKRSQRVHVPNWFTVDLKTGMPTIVLGQDEVDCFAAWVSAEAGLPEHAESGSDPKVNYGSLLLQALLEYWKPPPPHHHLQGGVPDMENGCDGDIRGNEYFIVPKHTPIIFSEVGGRNVCRLLVKDAAGETESALLSETVPSWVTNVVIERTIPKFIKLPFYLLAHPSMLKQDRSKKERLIANEFIQCRKVCEHVLEKVLGADLPGGGGGSSTGGGGNSNSSQNNSQSDANSEGSQVPAEERIELLCNDVNNEDYGKNIHLNT</sequence>
<gene>
    <name type="ORF">CPIJ014111</name>
</gene>
<name>WDR48_CULQU</name>
<feature type="chain" id="PRO_0000378977" description="WD repeat-containing protein 48 homolog">
    <location>
        <begin position="1"/>
        <end position="670"/>
    </location>
</feature>
<feature type="repeat" description="WD 1" evidence="4">
    <location>
        <begin position="13"/>
        <end position="52"/>
    </location>
</feature>
<feature type="repeat" description="WD 2" evidence="4">
    <location>
        <begin position="59"/>
        <end position="98"/>
    </location>
</feature>
<feature type="repeat" description="WD 3" evidence="4">
    <location>
        <begin position="101"/>
        <end position="140"/>
    </location>
</feature>
<feature type="repeat" description="WD 4" evidence="4">
    <location>
        <begin position="152"/>
        <end position="191"/>
    </location>
</feature>
<feature type="repeat" description="WD 5" evidence="4">
    <location>
        <begin position="194"/>
        <end position="233"/>
    </location>
</feature>
<feature type="repeat" description="WD 6" evidence="4">
    <location>
        <begin position="236"/>
        <end position="275"/>
    </location>
</feature>
<feature type="repeat" description="WD 7" evidence="4">
    <location>
        <begin position="278"/>
        <end position="317"/>
    </location>
</feature>
<feature type="repeat" description="WD 8" evidence="4">
    <location>
        <begin position="359"/>
        <end position="398"/>
    </location>
</feature>
<feature type="region of interest" description="Disordered" evidence="5">
    <location>
        <begin position="321"/>
        <end position="348"/>
    </location>
</feature>
<feature type="region of interest" description="Disordered" evidence="5">
    <location>
        <begin position="613"/>
        <end position="645"/>
    </location>
</feature>
<feature type="compositionally biased region" description="Low complexity" evidence="5">
    <location>
        <begin position="338"/>
        <end position="348"/>
    </location>
</feature>
<feature type="compositionally biased region" description="Gly residues" evidence="5">
    <location>
        <begin position="613"/>
        <end position="625"/>
    </location>
</feature>
<feature type="compositionally biased region" description="Low complexity" evidence="5">
    <location>
        <begin position="626"/>
        <end position="635"/>
    </location>
</feature>
<organism evidence="7">
    <name type="scientific">Culex quinquefasciatus</name>
    <name type="common">Southern house mosquito</name>
    <name type="synonym">Culex pungens</name>
    <dbReference type="NCBI Taxonomy" id="7176"/>
    <lineage>
        <taxon>Eukaryota</taxon>
        <taxon>Metazoa</taxon>
        <taxon>Ecdysozoa</taxon>
        <taxon>Arthropoda</taxon>
        <taxon>Hexapoda</taxon>
        <taxon>Insecta</taxon>
        <taxon>Pterygota</taxon>
        <taxon>Neoptera</taxon>
        <taxon>Endopterygota</taxon>
        <taxon>Diptera</taxon>
        <taxon>Nematocera</taxon>
        <taxon>Culicoidea</taxon>
        <taxon>Culicidae</taxon>
        <taxon>Culicinae</taxon>
        <taxon>Culicini</taxon>
        <taxon>Culex</taxon>
        <taxon>Culex</taxon>
    </lineage>
</organism>
<keyword id="KW-1185">Reference proteome</keyword>
<keyword id="KW-0677">Repeat</keyword>
<keyword id="KW-0833">Ubl conjugation pathway</keyword>
<keyword id="KW-0853">WD repeat</keyword>
<reference key="1">
    <citation type="submission" date="2007-03" db="EMBL/GenBank/DDBJ databases">
        <title>Annotation of Culex pipiens quinquefasciatus.</title>
        <authorList>
            <consortium name="The Broad Institute Genome Sequencing Platform"/>
            <person name="Atkinson P.W."/>
            <person name="Hemingway J."/>
            <person name="Christensen B.M."/>
            <person name="Higgs S."/>
            <person name="Kodira C.D."/>
            <person name="Hannick L.I."/>
            <person name="Megy K."/>
            <person name="O'Leary S.B."/>
            <person name="Pearson M."/>
            <person name="Haas B.J."/>
            <person name="Mauceli E."/>
            <person name="Wortman J.R."/>
            <person name="Lee N.H."/>
            <person name="Guigo R."/>
            <person name="Stanke M."/>
            <person name="Alvarado L."/>
            <person name="Amedeo P."/>
            <person name="Antoine C.H."/>
            <person name="Arensburger P."/>
            <person name="Bidwell S.L."/>
            <person name="Crawford M."/>
            <person name="Camaro F."/>
            <person name="Devon K."/>
            <person name="Engels R."/>
            <person name="Hammond M."/>
            <person name="Howarth C."/>
            <person name="Koehrsen M."/>
            <person name="Lawson D."/>
            <person name="Montgomery P."/>
            <person name="Nene V."/>
            <person name="Nusbaum C."/>
            <person name="Puiu D."/>
            <person name="Romero-Severson J."/>
            <person name="Severson D.W."/>
            <person name="Shumway M."/>
            <person name="Sisk P."/>
            <person name="Stolte C."/>
            <person name="Zeng Q."/>
            <person name="Eisenstadt E."/>
            <person name="Fraser-Liggett C.M."/>
            <person name="Strausberg R."/>
            <person name="Galagan J."/>
            <person name="Birren B."/>
            <person name="Collins F.H."/>
        </authorList>
    </citation>
    <scope>NUCLEOTIDE SEQUENCE [LARGE SCALE GENOMIC DNA]</scope>
    <source>
        <strain>JHB</strain>
    </source>
</reference>